<feature type="chain" id="PRO_0000229589" description="Small ribosomal subunit protein bS6">
    <location>
        <begin position="1"/>
        <end position="126"/>
    </location>
</feature>
<feature type="region of interest" description="Disordered" evidence="2">
    <location>
        <begin position="101"/>
        <end position="126"/>
    </location>
</feature>
<feature type="compositionally biased region" description="Basic and acidic residues" evidence="2">
    <location>
        <begin position="104"/>
        <end position="126"/>
    </location>
</feature>
<comment type="function">
    <text evidence="1">Binds together with bS18 to 16S ribosomal RNA.</text>
</comment>
<comment type="similarity">
    <text evidence="1">Belongs to the bacterial ribosomal protein bS6 family.</text>
</comment>
<accession>Q5E2D9</accession>
<reference key="1">
    <citation type="journal article" date="2005" name="Proc. Natl. Acad. Sci. U.S.A.">
        <title>Complete genome sequence of Vibrio fischeri: a symbiotic bacterium with pathogenic congeners.</title>
        <authorList>
            <person name="Ruby E.G."/>
            <person name="Urbanowski M."/>
            <person name="Campbell J."/>
            <person name="Dunn A."/>
            <person name="Faini M."/>
            <person name="Gunsalus R."/>
            <person name="Lostroh P."/>
            <person name="Lupp C."/>
            <person name="McCann J."/>
            <person name="Millikan D."/>
            <person name="Schaefer A."/>
            <person name="Stabb E."/>
            <person name="Stevens A."/>
            <person name="Visick K."/>
            <person name="Whistler C."/>
            <person name="Greenberg E.P."/>
        </authorList>
    </citation>
    <scope>NUCLEOTIDE SEQUENCE [LARGE SCALE GENOMIC DNA]</scope>
    <source>
        <strain>ATCC 700601 / ES114</strain>
    </source>
</reference>
<dbReference type="EMBL" id="CP000020">
    <property type="protein sequence ID" value="AAW86807.1"/>
    <property type="molecule type" value="Genomic_DNA"/>
</dbReference>
<dbReference type="RefSeq" id="WP_005421140.1">
    <property type="nucleotide sequence ID" value="NZ_CAWLES010000001.1"/>
</dbReference>
<dbReference type="RefSeq" id="YP_205695.1">
    <property type="nucleotide sequence ID" value="NC_006840.2"/>
</dbReference>
<dbReference type="SMR" id="Q5E2D9"/>
<dbReference type="STRING" id="312309.VF_2312"/>
<dbReference type="EnsemblBacteria" id="AAW86807">
    <property type="protein sequence ID" value="AAW86807"/>
    <property type="gene ID" value="VF_2312"/>
</dbReference>
<dbReference type="GeneID" id="56276702"/>
<dbReference type="KEGG" id="vfi:VF_2312"/>
<dbReference type="PATRIC" id="fig|312309.11.peg.2351"/>
<dbReference type="eggNOG" id="COG0360">
    <property type="taxonomic scope" value="Bacteria"/>
</dbReference>
<dbReference type="HOGENOM" id="CLU_113441_6_1_6"/>
<dbReference type="OrthoDB" id="9812702at2"/>
<dbReference type="Proteomes" id="UP000000537">
    <property type="component" value="Chromosome I"/>
</dbReference>
<dbReference type="GO" id="GO:0022627">
    <property type="term" value="C:cytosolic small ribosomal subunit"/>
    <property type="evidence" value="ECO:0007669"/>
    <property type="project" value="TreeGrafter"/>
</dbReference>
<dbReference type="GO" id="GO:0070181">
    <property type="term" value="F:small ribosomal subunit rRNA binding"/>
    <property type="evidence" value="ECO:0007669"/>
    <property type="project" value="TreeGrafter"/>
</dbReference>
<dbReference type="GO" id="GO:0003735">
    <property type="term" value="F:structural constituent of ribosome"/>
    <property type="evidence" value="ECO:0007669"/>
    <property type="project" value="InterPro"/>
</dbReference>
<dbReference type="GO" id="GO:0006412">
    <property type="term" value="P:translation"/>
    <property type="evidence" value="ECO:0007669"/>
    <property type="project" value="UniProtKB-UniRule"/>
</dbReference>
<dbReference type="CDD" id="cd00473">
    <property type="entry name" value="bS6"/>
    <property type="match status" value="1"/>
</dbReference>
<dbReference type="FunFam" id="3.30.70.60:FF:000003">
    <property type="entry name" value="30S ribosomal protein S6"/>
    <property type="match status" value="1"/>
</dbReference>
<dbReference type="Gene3D" id="3.30.70.60">
    <property type="match status" value="1"/>
</dbReference>
<dbReference type="HAMAP" id="MF_00360">
    <property type="entry name" value="Ribosomal_bS6"/>
    <property type="match status" value="1"/>
</dbReference>
<dbReference type="InterPro" id="IPR000529">
    <property type="entry name" value="Ribosomal_bS6"/>
</dbReference>
<dbReference type="InterPro" id="IPR035980">
    <property type="entry name" value="Ribosomal_bS6_sf"/>
</dbReference>
<dbReference type="InterPro" id="IPR020814">
    <property type="entry name" value="Ribosomal_S6_plastid/chlpt"/>
</dbReference>
<dbReference type="InterPro" id="IPR014717">
    <property type="entry name" value="Transl_elong_EF1B/ribsomal_bS6"/>
</dbReference>
<dbReference type="NCBIfam" id="TIGR00166">
    <property type="entry name" value="S6"/>
    <property type="match status" value="1"/>
</dbReference>
<dbReference type="PANTHER" id="PTHR21011">
    <property type="entry name" value="MITOCHONDRIAL 28S RIBOSOMAL PROTEIN S6"/>
    <property type="match status" value="1"/>
</dbReference>
<dbReference type="PANTHER" id="PTHR21011:SF1">
    <property type="entry name" value="SMALL RIBOSOMAL SUBUNIT PROTEIN BS6M"/>
    <property type="match status" value="1"/>
</dbReference>
<dbReference type="Pfam" id="PF01250">
    <property type="entry name" value="Ribosomal_S6"/>
    <property type="match status" value="1"/>
</dbReference>
<dbReference type="SUPFAM" id="SSF54995">
    <property type="entry name" value="Ribosomal protein S6"/>
    <property type="match status" value="1"/>
</dbReference>
<protein>
    <recommendedName>
        <fullName evidence="1">Small ribosomal subunit protein bS6</fullName>
    </recommendedName>
    <alternativeName>
        <fullName evidence="3">30S ribosomal protein S6</fullName>
    </alternativeName>
</protein>
<evidence type="ECO:0000255" key="1">
    <source>
        <dbReference type="HAMAP-Rule" id="MF_00360"/>
    </source>
</evidence>
<evidence type="ECO:0000256" key="2">
    <source>
        <dbReference type="SAM" id="MobiDB-lite"/>
    </source>
</evidence>
<evidence type="ECO:0000305" key="3"/>
<proteinExistence type="inferred from homology"/>
<organism>
    <name type="scientific">Aliivibrio fischeri (strain ATCC 700601 / ES114)</name>
    <name type="common">Vibrio fischeri</name>
    <dbReference type="NCBI Taxonomy" id="312309"/>
    <lineage>
        <taxon>Bacteria</taxon>
        <taxon>Pseudomonadati</taxon>
        <taxon>Pseudomonadota</taxon>
        <taxon>Gammaproteobacteria</taxon>
        <taxon>Vibrionales</taxon>
        <taxon>Vibrionaceae</taxon>
        <taxon>Aliivibrio</taxon>
    </lineage>
</organism>
<name>RS6_ALIF1</name>
<keyword id="KW-1185">Reference proteome</keyword>
<keyword id="KW-0687">Ribonucleoprotein</keyword>
<keyword id="KW-0689">Ribosomal protein</keyword>
<keyword id="KW-0694">RNA-binding</keyword>
<keyword id="KW-0699">rRNA-binding</keyword>
<sequence>MRHYEIVFMVHPDQSEQVAGMIERYTGSITEAGGTIHRLEDWGRRQMAYPINKLHKAHYVLMNVESEQAVIDELETAFRYNDAVLRNMIMRTKAAITEPSVMMKAKEERSAKREDAAPRAEEAAAE</sequence>
<gene>
    <name evidence="1" type="primary">rpsF</name>
    <name type="ordered locus">VF_2312</name>
</gene>